<sequence length="104" mass="11333">MSEFKNVTIIREANVYFNGGVTSRTIIFDSGCKKTLGVMMPGDYEFNTGSAELMEILSGDLDVLLPGADSWQTIKGGESFDVPANAAFKLKVKSLTDYCCSFLD</sequence>
<name>PPNP_GEOUR</name>
<dbReference type="EC" id="2.4.2.1" evidence="1"/>
<dbReference type="EC" id="2.4.2.2" evidence="1"/>
<dbReference type="EMBL" id="CP000698">
    <property type="protein sequence ID" value="ABQ26410.1"/>
    <property type="molecule type" value="Genomic_DNA"/>
</dbReference>
<dbReference type="RefSeq" id="WP_011939106.1">
    <property type="nucleotide sequence ID" value="NC_009483.1"/>
</dbReference>
<dbReference type="SMR" id="A5G3P2"/>
<dbReference type="STRING" id="351605.Gura_2227"/>
<dbReference type="KEGG" id="gur:Gura_2227"/>
<dbReference type="HOGENOM" id="CLU_157874_1_0_7"/>
<dbReference type="OrthoDB" id="9793848at2"/>
<dbReference type="Proteomes" id="UP000006695">
    <property type="component" value="Chromosome"/>
</dbReference>
<dbReference type="GO" id="GO:0005829">
    <property type="term" value="C:cytosol"/>
    <property type="evidence" value="ECO:0007669"/>
    <property type="project" value="TreeGrafter"/>
</dbReference>
<dbReference type="GO" id="GO:0047975">
    <property type="term" value="F:guanosine phosphorylase activity"/>
    <property type="evidence" value="ECO:0007669"/>
    <property type="project" value="UniProtKB-EC"/>
</dbReference>
<dbReference type="GO" id="GO:0004731">
    <property type="term" value="F:purine-nucleoside phosphorylase activity"/>
    <property type="evidence" value="ECO:0007669"/>
    <property type="project" value="UniProtKB-UniRule"/>
</dbReference>
<dbReference type="GO" id="GO:0009032">
    <property type="term" value="F:thymidine phosphorylase activity"/>
    <property type="evidence" value="ECO:0007669"/>
    <property type="project" value="UniProtKB-EC"/>
</dbReference>
<dbReference type="GO" id="GO:0004850">
    <property type="term" value="F:uridine phosphorylase activity"/>
    <property type="evidence" value="ECO:0007669"/>
    <property type="project" value="UniProtKB-EC"/>
</dbReference>
<dbReference type="CDD" id="cd20296">
    <property type="entry name" value="cupin_PpnP-like"/>
    <property type="match status" value="1"/>
</dbReference>
<dbReference type="FunFam" id="2.60.120.10:FF:000016">
    <property type="entry name" value="Pyrimidine/purine nucleoside phosphorylase"/>
    <property type="match status" value="1"/>
</dbReference>
<dbReference type="Gene3D" id="2.60.120.10">
    <property type="entry name" value="Jelly Rolls"/>
    <property type="match status" value="1"/>
</dbReference>
<dbReference type="HAMAP" id="MF_01537">
    <property type="entry name" value="Nucleos_phosphorylase_PpnP"/>
    <property type="match status" value="1"/>
</dbReference>
<dbReference type="InterPro" id="IPR009664">
    <property type="entry name" value="Ppnp"/>
</dbReference>
<dbReference type="InterPro" id="IPR014710">
    <property type="entry name" value="RmlC-like_jellyroll"/>
</dbReference>
<dbReference type="InterPro" id="IPR011051">
    <property type="entry name" value="RmlC_Cupin_sf"/>
</dbReference>
<dbReference type="PANTHER" id="PTHR36540">
    <property type="entry name" value="PYRIMIDINE/PURINE NUCLEOSIDE PHOSPHORYLASE"/>
    <property type="match status" value="1"/>
</dbReference>
<dbReference type="PANTHER" id="PTHR36540:SF1">
    <property type="entry name" value="PYRIMIDINE_PURINE NUCLEOSIDE PHOSPHORYLASE"/>
    <property type="match status" value="1"/>
</dbReference>
<dbReference type="Pfam" id="PF06865">
    <property type="entry name" value="Ppnp"/>
    <property type="match status" value="1"/>
</dbReference>
<dbReference type="SUPFAM" id="SSF51182">
    <property type="entry name" value="RmlC-like cupins"/>
    <property type="match status" value="1"/>
</dbReference>
<proteinExistence type="inferred from homology"/>
<gene>
    <name evidence="1" type="primary">ppnP</name>
    <name type="ordered locus">Gura_2227</name>
</gene>
<organism>
    <name type="scientific">Geotalea uraniireducens (strain Rf4)</name>
    <name type="common">Geobacter uraniireducens</name>
    <dbReference type="NCBI Taxonomy" id="351605"/>
    <lineage>
        <taxon>Bacteria</taxon>
        <taxon>Pseudomonadati</taxon>
        <taxon>Thermodesulfobacteriota</taxon>
        <taxon>Desulfuromonadia</taxon>
        <taxon>Geobacterales</taxon>
        <taxon>Geobacteraceae</taxon>
        <taxon>Geotalea</taxon>
    </lineage>
</organism>
<comment type="function">
    <text evidence="1">Catalyzes the phosphorolysis of diverse nucleosides, yielding D-ribose 1-phosphate and the respective free bases. Can use uridine, adenosine, guanosine, cytidine, thymidine, inosine and xanthosine as substrates. Also catalyzes the reverse reactions.</text>
</comment>
<comment type="catalytic activity">
    <reaction evidence="1">
        <text>a purine D-ribonucleoside + phosphate = a purine nucleobase + alpha-D-ribose 1-phosphate</text>
        <dbReference type="Rhea" id="RHEA:19805"/>
        <dbReference type="ChEBI" id="CHEBI:26386"/>
        <dbReference type="ChEBI" id="CHEBI:43474"/>
        <dbReference type="ChEBI" id="CHEBI:57720"/>
        <dbReference type="ChEBI" id="CHEBI:142355"/>
        <dbReference type="EC" id="2.4.2.1"/>
    </reaction>
</comment>
<comment type="catalytic activity">
    <reaction evidence="1">
        <text>adenosine + phosphate = alpha-D-ribose 1-phosphate + adenine</text>
        <dbReference type="Rhea" id="RHEA:27642"/>
        <dbReference type="ChEBI" id="CHEBI:16335"/>
        <dbReference type="ChEBI" id="CHEBI:16708"/>
        <dbReference type="ChEBI" id="CHEBI:43474"/>
        <dbReference type="ChEBI" id="CHEBI:57720"/>
        <dbReference type="EC" id="2.4.2.1"/>
    </reaction>
</comment>
<comment type="catalytic activity">
    <reaction evidence="1">
        <text>cytidine + phosphate = cytosine + alpha-D-ribose 1-phosphate</text>
        <dbReference type="Rhea" id="RHEA:52540"/>
        <dbReference type="ChEBI" id="CHEBI:16040"/>
        <dbReference type="ChEBI" id="CHEBI:17562"/>
        <dbReference type="ChEBI" id="CHEBI:43474"/>
        <dbReference type="ChEBI" id="CHEBI:57720"/>
        <dbReference type="EC" id="2.4.2.2"/>
    </reaction>
</comment>
<comment type="catalytic activity">
    <reaction evidence="1">
        <text>guanosine + phosphate = alpha-D-ribose 1-phosphate + guanine</text>
        <dbReference type="Rhea" id="RHEA:13233"/>
        <dbReference type="ChEBI" id="CHEBI:16235"/>
        <dbReference type="ChEBI" id="CHEBI:16750"/>
        <dbReference type="ChEBI" id="CHEBI:43474"/>
        <dbReference type="ChEBI" id="CHEBI:57720"/>
        <dbReference type="EC" id="2.4.2.1"/>
    </reaction>
</comment>
<comment type="catalytic activity">
    <reaction evidence="1">
        <text>inosine + phosphate = alpha-D-ribose 1-phosphate + hypoxanthine</text>
        <dbReference type="Rhea" id="RHEA:27646"/>
        <dbReference type="ChEBI" id="CHEBI:17368"/>
        <dbReference type="ChEBI" id="CHEBI:17596"/>
        <dbReference type="ChEBI" id="CHEBI:43474"/>
        <dbReference type="ChEBI" id="CHEBI:57720"/>
        <dbReference type="EC" id="2.4.2.1"/>
    </reaction>
</comment>
<comment type="catalytic activity">
    <reaction evidence="1">
        <text>thymidine + phosphate = 2-deoxy-alpha-D-ribose 1-phosphate + thymine</text>
        <dbReference type="Rhea" id="RHEA:16037"/>
        <dbReference type="ChEBI" id="CHEBI:17748"/>
        <dbReference type="ChEBI" id="CHEBI:17821"/>
        <dbReference type="ChEBI" id="CHEBI:43474"/>
        <dbReference type="ChEBI" id="CHEBI:57259"/>
        <dbReference type="EC" id="2.4.2.2"/>
    </reaction>
</comment>
<comment type="catalytic activity">
    <reaction evidence="1">
        <text>uridine + phosphate = alpha-D-ribose 1-phosphate + uracil</text>
        <dbReference type="Rhea" id="RHEA:24388"/>
        <dbReference type="ChEBI" id="CHEBI:16704"/>
        <dbReference type="ChEBI" id="CHEBI:17568"/>
        <dbReference type="ChEBI" id="CHEBI:43474"/>
        <dbReference type="ChEBI" id="CHEBI:57720"/>
        <dbReference type="EC" id="2.4.2.2"/>
    </reaction>
</comment>
<comment type="catalytic activity">
    <reaction evidence="1">
        <text>xanthosine + phosphate = alpha-D-ribose 1-phosphate + xanthine</text>
        <dbReference type="Rhea" id="RHEA:27638"/>
        <dbReference type="ChEBI" id="CHEBI:17712"/>
        <dbReference type="ChEBI" id="CHEBI:18107"/>
        <dbReference type="ChEBI" id="CHEBI:43474"/>
        <dbReference type="ChEBI" id="CHEBI:57720"/>
        <dbReference type="EC" id="2.4.2.1"/>
    </reaction>
</comment>
<comment type="similarity">
    <text evidence="1">Belongs to the nucleoside phosphorylase PpnP family.</text>
</comment>
<keyword id="KW-0328">Glycosyltransferase</keyword>
<keyword id="KW-1185">Reference proteome</keyword>
<keyword id="KW-0808">Transferase</keyword>
<evidence type="ECO:0000255" key="1">
    <source>
        <dbReference type="HAMAP-Rule" id="MF_01537"/>
    </source>
</evidence>
<accession>A5G3P2</accession>
<protein>
    <recommendedName>
        <fullName evidence="1">Pyrimidine/purine nucleoside phosphorylase</fullName>
        <ecNumber evidence="1">2.4.2.1</ecNumber>
        <ecNumber evidence="1">2.4.2.2</ecNumber>
    </recommendedName>
    <alternativeName>
        <fullName evidence="1">Adenosine phosphorylase</fullName>
    </alternativeName>
    <alternativeName>
        <fullName evidence="1">Cytidine phosphorylase</fullName>
    </alternativeName>
    <alternativeName>
        <fullName evidence="1">Guanosine phosphorylase</fullName>
    </alternativeName>
    <alternativeName>
        <fullName evidence="1">Inosine phosphorylase</fullName>
    </alternativeName>
    <alternativeName>
        <fullName evidence="1">Thymidine phosphorylase</fullName>
    </alternativeName>
    <alternativeName>
        <fullName evidence="1">Uridine phosphorylase</fullName>
    </alternativeName>
    <alternativeName>
        <fullName evidence="1">Xanthosine phosphorylase</fullName>
    </alternativeName>
</protein>
<reference key="1">
    <citation type="submission" date="2007-05" db="EMBL/GenBank/DDBJ databases">
        <title>Complete sequence of Geobacter uraniireducens Rf4.</title>
        <authorList>
            <consortium name="US DOE Joint Genome Institute"/>
            <person name="Copeland A."/>
            <person name="Lucas S."/>
            <person name="Lapidus A."/>
            <person name="Barry K."/>
            <person name="Detter J.C."/>
            <person name="Glavina del Rio T."/>
            <person name="Hammon N."/>
            <person name="Israni S."/>
            <person name="Dalin E."/>
            <person name="Tice H."/>
            <person name="Pitluck S."/>
            <person name="Chertkov O."/>
            <person name="Brettin T."/>
            <person name="Bruce D."/>
            <person name="Han C."/>
            <person name="Schmutz J."/>
            <person name="Larimer F."/>
            <person name="Land M."/>
            <person name="Hauser L."/>
            <person name="Kyrpides N."/>
            <person name="Mikhailova N."/>
            <person name="Shelobolina E."/>
            <person name="Aklujkar M."/>
            <person name="Lovley D."/>
            <person name="Richardson P."/>
        </authorList>
    </citation>
    <scope>NUCLEOTIDE SEQUENCE [LARGE SCALE GENOMIC DNA]</scope>
    <source>
        <strain>ATCC BAA-1134 / JCM 13001 / Rf4</strain>
    </source>
</reference>
<feature type="chain" id="PRO_1000087609" description="Pyrimidine/purine nucleoside phosphorylase">
    <location>
        <begin position="1"/>
        <end position="104"/>
    </location>
</feature>